<reference key="1">
    <citation type="journal article" date="1999" name="DNA Seq.">
        <title>Cloning and characterization of the human novel gene encoding 6.2 kDa protein highly expressed upon ultraviolet irradiation in DNA-PK-deleted human glioma M059J cells.</title>
        <authorList>
            <person name="Lee J.-S."/>
        </authorList>
    </citation>
    <scope>NUCLEOTIDE SEQUENCE [MRNA]</scope>
    <source>
        <tissue>Brain tumor</tissue>
    </source>
</reference>
<reference key="2">
    <citation type="journal article" date="2000" name="Proc. Natl. Acad. Sci. U.S.A.">
        <title>Gene expression profiling in the human hypothalamus-pituitary-adrenal axis and full-length cDNA cloning.</title>
        <authorList>
            <person name="Hu R.-M."/>
            <person name="Han Z.-G."/>
            <person name="Song H.-D."/>
            <person name="Peng Y.-D."/>
            <person name="Huang Q.-H."/>
            <person name="Ren S.-X."/>
            <person name="Gu Y.-J."/>
            <person name="Huang C.-H."/>
            <person name="Li Y.-B."/>
            <person name="Jiang C.-L."/>
            <person name="Fu G."/>
            <person name="Zhang Q.-H."/>
            <person name="Gu B.-W."/>
            <person name="Dai M."/>
            <person name="Mao Y.-F."/>
            <person name="Gao G.-F."/>
            <person name="Rong R."/>
            <person name="Ye M."/>
            <person name="Zhou J."/>
            <person name="Xu S.-H."/>
            <person name="Gu J."/>
            <person name="Shi J.-X."/>
            <person name="Jin W.-R."/>
            <person name="Zhang C.-K."/>
            <person name="Wu T.-M."/>
            <person name="Huang G.-Y."/>
            <person name="Chen Z."/>
            <person name="Chen M.-D."/>
            <person name="Chen J.-L."/>
        </authorList>
    </citation>
    <scope>NUCLEOTIDE SEQUENCE [LARGE SCALE MRNA]</scope>
    <source>
        <tissue>Adrenal gland</tissue>
    </source>
</reference>
<reference key="3">
    <citation type="journal article" date="2004" name="Genome Res.">
        <title>The status, quality, and expansion of the NIH full-length cDNA project: the Mammalian Gene Collection (MGC).</title>
        <authorList>
            <consortium name="The MGC Project Team"/>
        </authorList>
    </citation>
    <scope>NUCLEOTIDE SEQUENCE [LARGE SCALE MRNA]</scope>
    <source>
        <tissue>Eye</tissue>
    </source>
</reference>
<reference key="4">
    <citation type="journal article" date="2002" name="J. Biol. Chem.">
        <title>Insertion and assembly of human tom7 into the preprotein translocase complex of the outer mitochondrial membrane.</title>
        <authorList>
            <person name="Johnston A.J."/>
            <person name="Hoogenraad J."/>
            <person name="Dougan D.A."/>
            <person name="Truscott K.N."/>
            <person name="Yano M."/>
            <person name="Mori M."/>
            <person name="Hoogenraad N.J."/>
            <person name="Ryan M.T."/>
        </authorList>
    </citation>
    <scope>SUBCELLULAR LOCATION</scope>
    <scope>IDENTIFICATION IN THE TOM COMPLEX WITH TOMM20; TOMM22 AND TOMM40</scope>
    <scope>TOPOLOGY</scope>
</reference>
<reference key="5">
    <citation type="journal article" date="2008" name="Biochem. Biophys. Res. Commun.">
        <title>Identification of Tom5 and Tom6 in the preprotein translocase complex of human mitochondrial outer membrane.</title>
        <authorList>
            <person name="Kato H."/>
            <person name="Mihara K."/>
        </authorList>
    </citation>
    <scope>FUNCTION</scope>
    <scope>IDENTIFICATION IN THE TOM COMPLEX</scope>
</reference>
<reference key="6">
    <citation type="journal article" date="2012" name="Proc. Natl. Acad. Sci. U.S.A.">
        <title>N-terminal acetylome analyses and functional insights of the N-terminal acetyltransferase NatB.</title>
        <authorList>
            <person name="Van Damme P."/>
            <person name="Lasa M."/>
            <person name="Polevoda B."/>
            <person name="Gazquez C."/>
            <person name="Elosegui-Artola A."/>
            <person name="Kim D.S."/>
            <person name="De Juan-Pardo E."/>
            <person name="Demeyer K."/>
            <person name="Hole K."/>
            <person name="Larrea E."/>
            <person name="Timmerman E."/>
            <person name="Prieto J."/>
            <person name="Arnesen T."/>
            <person name="Sherman F."/>
            <person name="Gevaert K."/>
            <person name="Aldabe R."/>
        </authorList>
    </citation>
    <scope>IDENTIFICATION BY MASS SPECTROMETRY [LARGE SCALE ANALYSIS]</scope>
</reference>
<reference key="7">
    <citation type="journal article" date="2013" name="Nature">
        <title>High-content genome-wide RNAi screens identify regulators of parkin upstream of mitophagy.</title>
        <authorList>
            <person name="Hasson S.A."/>
            <person name="Kane L.A."/>
            <person name="Yamano K."/>
            <person name="Huang C.H."/>
            <person name="Sliter D.A."/>
            <person name="Buehler E."/>
            <person name="Wang C."/>
            <person name="Heman-Ackah S.M."/>
            <person name="Hessa T."/>
            <person name="Guha R."/>
            <person name="Martin S.E."/>
            <person name="Youle R.J."/>
        </authorList>
    </citation>
    <scope>FUNCTION</scope>
</reference>
<reference key="8">
    <citation type="journal article" date="2015" name="Proteomics">
        <title>N-terminome analysis of the human mitochondrial proteome.</title>
        <authorList>
            <person name="Vaca Jacome A.S."/>
            <person name="Rabilloud T."/>
            <person name="Schaeffer-Reiss C."/>
            <person name="Rompais M."/>
            <person name="Ayoub D."/>
            <person name="Lane L."/>
            <person name="Bairoch A."/>
            <person name="Van Dorsselaer A."/>
            <person name="Carapito C."/>
        </authorList>
    </citation>
    <scope>IDENTIFICATION BY MASS SPECTROMETRY [LARGE SCALE ANALYSIS]</scope>
</reference>
<reference key="9">
    <citation type="journal article" date="2022" name="J. Clin. Invest.">
        <title>Autosomal recessive progeroid syndrome due to homozygosity for a TOMM7 variant.</title>
        <authorList>
            <person name="Garg A."/>
            <person name="Keng W.T."/>
            <person name="Chen Z."/>
            <person name="Sathe A.A."/>
            <person name="Xing C."/>
            <person name="Kailasam P.D."/>
            <person name="Shao Y."/>
            <person name="Lesner N.P."/>
            <person name="Llamas C.B."/>
            <person name="Agarwal A.K."/>
            <person name="Mishra P."/>
        </authorList>
    </citation>
    <scope>VARIANT GMPGS LEU-29</scope>
    <scope>CHARACTERIZATION OF VARIANT GMPGS LEU-29</scope>
    <scope>INVOLVEMENT IN GMPGS</scope>
</reference>
<reference key="10">
    <citation type="journal article" date="2023" name="HGG Adv.">
        <title>A hypomorphic variant in the translocase of the outer mitochondrial membrane complex subunit TOMM7 causes short stature and developmental delay.</title>
        <authorList>
            <person name="Young C."/>
            <person name="Batkovskyte D."/>
            <person name="Kitamura M."/>
            <person name="Shvedova M."/>
            <person name="Mihara Y."/>
            <person name="Akiba J."/>
            <person name="Zhou W."/>
            <person name="Hammarsjoe A."/>
            <person name="Nishimura G."/>
            <person name="Yatsuga S."/>
            <person name="Grigelioniene G."/>
            <person name="Kobayashi T."/>
        </authorList>
    </citation>
    <scope>VARIANT GMPGS ARG-25</scope>
    <scope>CHARACTERIZATION OF VARIANT GMPGS ARG-25</scope>
    <scope>INVOLVEMENT IN GMPGS</scope>
</reference>
<comment type="function">
    <text evidence="3 4">Required for assembly and stability of the TOM complex. Positive regulator of PRKN translocation to damaged mitochondria. Acts probably by stabilizing PINK1 on the outer membrane of depolarized mitochondria.</text>
</comment>
<comment type="subunit">
    <text evidence="2 3">Forms part of the preprotein translocase complex of the outer mitochondrial membrane (TOM complex) which consists of at least 7 different proteins (TOMM5, TOMM6, TOMM7, TOMM20, TOMM22, TOMM40 and TOMM70).</text>
</comment>
<comment type="interaction">
    <interactant intactId="EBI-1180558">
        <id>Q9P0U1</id>
    </interactant>
    <interactant intactId="EBI-711636">
        <id>Q15388</id>
        <label>TOMM20</label>
    </interactant>
    <organismsDiffer>false</organismsDiffer>
    <experiments>2</experiments>
</comment>
<comment type="interaction">
    <interactant intactId="EBI-1180558">
        <id>Q9P0U1</id>
    </interactant>
    <interactant intactId="EBI-1047508">
        <id>Q9NS69</id>
        <label>TOMM22</label>
    </interactant>
    <organismsDiffer>false</organismsDiffer>
    <experiments>2</experiments>
</comment>
<comment type="subcellular location">
    <subcellularLocation>
        <location evidence="2">Mitochondrion outer membrane</location>
        <topology evidence="2">Single-pass membrane protein</topology>
    </subcellularLocation>
</comment>
<comment type="disease" evidence="5 6">
    <disease id="DI-06792">
        <name>Garg-Mishra progeroid syndrome</name>
        <acronym>GMPGS</acronym>
        <description>An autosomal recessive syndrome characterized by a progeroid appearance, severe dwarfism, mandibular hypoplasia, hyperopia, and partial lipodystrophy.</description>
        <dbReference type="MIM" id="620601"/>
    </disease>
    <text>The disease is caused by variants affecting the gene represented in this entry.</text>
</comment>
<comment type="similarity">
    <text evidence="7">Belongs to the Tom7 family.</text>
</comment>
<proteinExistence type="evidence at protein level"/>
<accession>Q9P0U1</accession>
<accession>O95939</accession>
<organism>
    <name type="scientific">Homo sapiens</name>
    <name type="common">Human</name>
    <dbReference type="NCBI Taxonomy" id="9606"/>
    <lineage>
        <taxon>Eukaryota</taxon>
        <taxon>Metazoa</taxon>
        <taxon>Chordata</taxon>
        <taxon>Craniata</taxon>
        <taxon>Vertebrata</taxon>
        <taxon>Euteleostomi</taxon>
        <taxon>Mammalia</taxon>
        <taxon>Eutheria</taxon>
        <taxon>Euarchontoglires</taxon>
        <taxon>Primates</taxon>
        <taxon>Haplorrhini</taxon>
        <taxon>Catarrhini</taxon>
        <taxon>Hominidae</taxon>
        <taxon>Homo</taxon>
    </lineage>
</organism>
<sequence>MVKLSKEAKQRLQQLFKGSQFAIRWGFIPLVIYLGFKRGADPGMPEPTVLSLLWG</sequence>
<evidence type="ECO:0000255" key="1"/>
<evidence type="ECO:0000269" key="2">
    <source>
    </source>
</evidence>
<evidence type="ECO:0000269" key="3">
    <source>
    </source>
</evidence>
<evidence type="ECO:0000269" key="4">
    <source>
    </source>
</evidence>
<evidence type="ECO:0000269" key="5">
    <source>
    </source>
</evidence>
<evidence type="ECO:0000269" key="6">
    <source>
    </source>
</evidence>
<evidence type="ECO:0000305" key="7"/>
<evidence type="ECO:0007829" key="8">
    <source>
        <dbReference type="PDB" id="7CK6"/>
    </source>
</evidence>
<evidence type="ECO:0007829" key="9">
    <source>
        <dbReference type="PDB" id="7VD2"/>
    </source>
</evidence>
<dbReference type="EMBL" id="AJ011007">
    <property type="protein sequence ID" value="CAB38060.1"/>
    <property type="molecule type" value="mRNA"/>
</dbReference>
<dbReference type="EMBL" id="AF150733">
    <property type="protein sequence ID" value="AAF67473.1"/>
    <property type="molecule type" value="mRNA"/>
</dbReference>
<dbReference type="EMBL" id="BC001732">
    <property type="protein sequence ID" value="AAH01732.1"/>
    <property type="molecule type" value="mRNA"/>
</dbReference>
<dbReference type="CCDS" id="CCDS5376.1"/>
<dbReference type="RefSeq" id="NP_061932.1">
    <property type="nucleotide sequence ID" value="NM_019059.5"/>
</dbReference>
<dbReference type="PDB" id="7CK6">
    <property type="method" value="EM"/>
    <property type="resolution" value="3.40 A"/>
    <property type="chains" value="G/H=1-55"/>
</dbReference>
<dbReference type="PDB" id="7CP9">
    <property type="method" value="EM"/>
    <property type="resolution" value="3.00 A"/>
    <property type="chains" value="E/F=1-55"/>
</dbReference>
<dbReference type="PDB" id="7VBY">
    <property type="method" value="EM"/>
    <property type="resolution" value="2.54 A"/>
    <property type="chains" value="G/J=1-55"/>
</dbReference>
<dbReference type="PDB" id="7VC4">
    <property type="method" value="EM"/>
    <property type="resolution" value="3.74 A"/>
    <property type="chains" value="G/J=1-55"/>
</dbReference>
<dbReference type="PDB" id="7VD2">
    <property type="method" value="EM"/>
    <property type="resolution" value="2.53 A"/>
    <property type="chains" value="G/J=1-55"/>
</dbReference>
<dbReference type="PDB" id="7VDD">
    <property type="method" value="EM"/>
    <property type="resolution" value="3.74 A"/>
    <property type="chains" value="G/J=1-55"/>
</dbReference>
<dbReference type="PDB" id="8XVA">
    <property type="method" value="EM"/>
    <property type="resolution" value="5.92 A"/>
    <property type="chains" value="G/J=1-55"/>
</dbReference>
<dbReference type="PDB" id="9EIH">
    <property type="method" value="EM"/>
    <property type="resolution" value="3.10 A"/>
    <property type="chains" value="M/N/W/X=1-55"/>
</dbReference>
<dbReference type="PDB" id="9EII">
    <property type="method" value="EM"/>
    <property type="resolution" value="2.75 A"/>
    <property type="chains" value="N/X=1-55"/>
</dbReference>
<dbReference type="PDB" id="9EIJ">
    <property type="method" value="EM"/>
    <property type="resolution" value="3.30 A"/>
    <property type="chains" value="N/X=1-55"/>
</dbReference>
<dbReference type="PDBsum" id="7CK6"/>
<dbReference type="PDBsum" id="7CP9"/>
<dbReference type="PDBsum" id="7VBY"/>
<dbReference type="PDBsum" id="7VC4"/>
<dbReference type="PDBsum" id="7VD2"/>
<dbReference type="PDBsum" id="7VDD"/>
<dbReference type="PDBsum" id="8XVA"/>
<dbReference type="PDBsum" id="9EIH"/>
<dbReference type="PDBsum" id="9EII"/>
<dbReference type="PDBsum" id="9EIJ"/>
<dbReference type="EMDB" id="EMD-30382"/>
<dbReference type="EMDB" id="EMD-30421"/>
<dbReference type="EMDB" id="EMD-31885"/>
<dbReference type="EMDB" id="EMD-31888"/>
<dbReference type="EMDB" id="EMD-31904"/>
<dbReference type="EMDB" id="EMD-31914"/>
<dbReference type="EMDB" id="EMD-38694"/>
<dbReference type="EMDB" id="EMD-48083"/>
<dbReference type="EMDB" id="EMD-48084"/>
<dbReference type="EMDB" id="EMD-48085"/>
<dbReference type="SMR" id="Q9P0U1"/>
<dbReference type="BioGRID" id="120030">
    <property type="interactions" value="30"/>
</dbReference>
<dbReference type="ComplexPortal" id="CPX-6121">
    <property type="entry name" value="TOM40 mitochondrial outer membrane translocase complex"/>
</dbReference>
<dbReference type="CORUM" id="Q9P0U1"/>
<dbReference type="FunCoup" id="Q9P0U1">
    <property type="interactions" value="512"/>
</dbReference>
<dbReference type="IntAct" id="Q9P0U1">
    <property type="interactions" value="8"/>
</dbReference>
<dbReference type="STRING" id="9606.ENSP00000351214"/>
<dbReference type="iPTMnet" id="Q9P0U1"/>
<dbReference type="PhosphoSitePlus" id="Q9P0U1"/>
<dbReference type="BioMuta" id="TOMM7"/>
<dbReference type="DMDM" id="12643829"/>
<dbReference type="jPOST" id="Q9P0U1"/>
<dbReference type="MassIVE" id="Q9P0U1"/>
<dbReference type="PaxDb" id="9606-ENSP00000351214"/>
<dbReference type="PeptideAtlas" id="Q9P0U1"/>
<dbReference type="ProteomicsDB" id="83597"/>
<dbReference type="Pumba" id="Q9P0U1"/>
<dbReference type="TopDownProteomics" id="Q9P0U1"/>
<dbReference type="Antibodypedia" id="53355">
    <property type="antibodies" value="28 antibodies from 11 providers"/>
</dbReference>
<dbReference type="DNASU" id="54543"/>
<dbReference type="Ensembl" id="ENST00000358435.9">
    <property type="protein sequence ID" value="ENSP00000351214.4"/>
    <property type="gene ID" value="ENSG00000196683.12"/>
</dbReference>
<dbReference type="GeneID" id="54543"/>
<dbReference type="KEGG" id="hsa:54543"/>
<dbReference type="MANE-Select" id="ENST00000358435.9">
    <property type="protein sequence ID" value="ENSP00000351214.4"/>
    <property type="RefSeq nucleotide sequence ID" value="NM_019059.5"/>
    <property type="RefSeq protein sequence ID" value="NP_061932.1"/>
</dbReference>
<dbReference type="UCSC" id="uc003svk.6">
    <property type="organism name" value="human"/>
</dbReference>
<dbReference type="AGR" id="HGNC:21648"/>
<dbReference type="CTD" id="54543"/>
<dbReference type="DisGeNET" id="54543"/>
<dbReference type="GeneCards" id="TOMM7"/>
<dbReference type="HGNC" id="HGNC:21648">
    <property type="gene designation" value="TOMM7"/>
</dbReference>
<dbReference type="HPA" id="ENSG00000196683">
    <property type="expression patterns" value="Low tissue specificity"/>
</dbReference>
<dbReference type="MalaCards" id="TOMM7"/>
<dbReference type="MIM" id="607980">
    <property type="type" value="gene"/>
</dbReference>
<dbReference type="MIM" id="620601">
    <property type="type" value="phenotype"/>
</dbReference>
<dbReference type="neXtProt" id="NX_Q9P0U1"/>
<dbReference type="OpenTargets" id="ENSG00000196683"/>
<dbReference type="PharmGKB" id="PA134864325"/>
<dbReference type="VEuPathDB" id="HostDB:ENSG00000196683"/>
<dbReference type="eggNOG" id="KOG4449">
    <property type="taxonomic scope" value="Eukaryota"/>
</dbReference>
<dbReference type="GeneTree" id="ENSGT00390000014833"/>
<dbReference type="HOGENOM" id="CLU_173610_2_1_1"/>
<dbReference type="InParanoid" id="Q9P0U1"/>
<dbReference type="OMA" id="LMNLLWQ"/>
<dbReference type="OrthoDB" id="284357at2759"/>
<dbReference type="PAN-GO" id="Q9P0U1">
    <property type="GO annotations" value="2 GO annotations based on evolutionary models"/>
</dbReference>
<dbReference type="PhylomeDB" id="Q9P0U1"/>
<dbReference type="TreeFam" id="TF106199"/>
<dbReference type="PathwayCommons" id="Q9P0U1"/>
<dbReference type="Reactome" id="R-HSA-1268020">
    <property type="pathway name" value="Mitochondrial protein import"/>
</dbReference>
<dbReference type="Reactome" id="R-HSA-5205685">
    <property type="pathway name" value="PINK1-PRKN Mediated Mitophagy"/>
</dbReference>
<dbReference type="SignaLink" id="Q9P0U1"/>
<dbReference type="SIGNOR" id="Q9P0U1"/>
<dbReference type="BioGRID-ORCS" id="54543">
    <property type="hits" value="39 hits in 1148 CRISPR screens"/>
</dbReference>
<dbReference type="ChiTaRS" id="TOMM7">
    <property type="organism name" value="human"/>
</dbReference>
<dbReference type="GenomeRNAi" id="54543"/>
<dbReference type="Pharos" id="Q9P0U1">
    <property type="development level" value="Tbio"/>
</dbReference>
<dbReference type="PRO" id="PR:Q9P0U1"/>
<dbReference type="Proteomes" id="UP000005640">
    <property type="component" value="Chromosome 7"/>
</dbReference>
<dbReference type="RNAct" id="Q9P0U1">
    <property type="molecule type" value="protein"/>
</dbReference>
<dbReference type="Bgee" id="ENSG00000196683">
    <property type="expression patterns" value="Expressed in skeletal muscle tissue of rectus abdominis and 212 other cell types or tissues"/>
</dbReference>
<dbReference type="ExpressionAtlas" id="Q9P0U1">
    <property type="expression patterns" value="baseline and differential"/>
</dbReference>
<dbReference type="GO" id="GO:0005741">
    <property type="term" value="C:mitochondrial outer membrane"/>
    <property type="evidence" value="ECO:0000304"/>
    <property type="project" value="Reactome"/>
</dbReference>
<dbReference type="GO" id="GO:0005742">
    <property type="term" value="C:mitochondrial outer membrane translocase complex"/>
    <property type="evidence" value="ECO:0000314"/>
    <property type="project" value="BHF-UCL"/>
</dbReference>
<dbReference type="GO" id="GO:0005739">
    <property type="term" value="C:mitochondrion"/>
    <property type="evidence" value="ECO:0000314"/>
    <property type="project" value="BHF-UCL"/>
</dbReference>
<dbReference type="GO" id="GO:0140596">
    <property type="term" value="C:TOM complex"/>
    <property type="evidence" value="ECO:0000303"/>
    <property type="project" value="ComplexPortal"/>
</dbReference>
<dbReference type="GO" id="GO:0008320">
    <property type="term" value="F:protein transmembrane transporter activity"/>
    <property type="evidence" value="ECO:0000304"/>
    <property type="project" value="BHF-UCL"/>
</dbReference>
<dbReference type="GO" id="GO:1903955">
    <property type="term" value="P:positive regulation of protein targeting to mitochondrion"/>
    <property type="evidence" value="ECO:0000315"/>
    <property type="project" value="ParkinsonsUK-UCL"/>
</dbReference>
<dbReference type="GO" id="GO:1905091">
    <property type="term" value="P:positive regulation of type 2 mitophagy"/>
    <property type="evidence" value="ECO:0000315"/>
    <property type="project" value="ParkinsonsUK-UCL"/>
</dbReference>
<dbReference type="GO" id="GO:0030150">
    <property type="term" value="P:protein import into mitochondrial matrix"/>
    <property type="evidence" value="ECO:0000304"/>
    <property type="project" value="BHF-UCL"/>
</dbReference>
<dbReference type="GO" id="GO:0045040">
    <property type="term" value="P:protein insertion into mitochondrial outer membrane"/>
    <property type="evidence" value="ECO:0000303"/>
    <property type="project" value="ComplexPortal"/>
</dbReference>
<dbReference type="GO" id="GO:0031647">
    <property type="term" value="P:regulation of protein stability"/>
    <property type="evidence" value="ECO:0000315"/>
    <property type="project" value="ParkinsonsUK-UCL"/>
</dbReference>
<dbReference type="InterPro" id="IPR012621">
    <property type="entry name" value="Tom7"/>
</dbReference>
<dbReference type="PANTHER" id="PTHR46722">
    <property type="entry name" value="MITOCHONDRIAL IMPORT RECEPTOR SUBUNIT TOM7 HOMOLOG"/>
    <property type="match status" value="1"/>
</dbReference>
<dbReference type="PANTHER" id="PTHR46722:SF1">
    <property type="entry name" value="MITOCHONDRIAL IMPORT RECEPTOR SUBUNIT TOM7 HOMOLOG"/>
    <property type="match status" value="1"/>
</dbReference>
<dbReference type="Pfam" id="PF08038">
    <property type="entry name" value="Tom7"/>
    <property type="match status" value="1"/>
</dbReference>
<gene>
    <name type="primary">TOMM7</name>
    <name type="synonym">TOM7</name>
    <name type="synonym">TOMM07</name>
    <name type="ORF">AD-014</name>
</gene>
<protein>
    <recommendedName>
        <fullName>Mitochondrial import receptor subunit TOM7 homolog</fullName>
    </recommendedName>
    <alternativeName>
        <fullName>Translocase of outer membrane 7 kDa subunit homolog</fullName>
    </alternativeName>
</protein>
<keyword id="KW-0002">3D-structure</keyword>
<keyword id="KW-0225">Disease variant</keyword>
<keyword id="KW-0472">Membrane</keyword>
<keyword id="KW-0496">Mitochondrion</keyword>
<keyword id="KW-1000">Mitochondrion outer membrane</keyword>
<keyword id="KW-0653">Protein transport</keyword>
<keyword id="KW-1267">Proteomics identification</keyword>
<keyword id="KW-1185">Reference proteome</keyword>
<keyword id="KW-0812">Transmembrane</keyword>
<keyword id="KW-1133">Transmembrane helix</keyword>
<keyword id="KW-0813">Transport</keyword>
<name>TOM7_HUMAN</name>
<feature type="chain" id="PRO_0000046759" description="Mitochondrial import receptor subunit TOM7 homolog">
    <location>
        <begin position="1"/>
        <end position="55"/>
    </location>
</feature>
<feature type="topological domain" description="Cytoplasmic" evidence="2">
    <location>
        <begin position="1"/>
        <end position="20"/>
    </location>
</feature>
<feature type="transmembrane region" description="Helical" evidence="1">
    <location>
        <begin position="21"/>
        <end position="36"/>
    </location>
</feature>
<feature type="topological domain" description="Mitochondrial intermembrane" evidence="2">
    <location>
        <begin position="37"/>
        <end position="55"/>
    </location>
</feature>
<feature type="sequence variant" id="VAR_089166" description="In GMPGS; likely pathogenic; the orthologous mutation in mice results in growth defects, lipoatrophy and lipid accumulation in the liver; dbSNP:rs1782411099." evidence="6">
    <original>W</original>
    <variation>R</variation>
    <location>
        <position position="25"/>
    </location>
</feature>
<feature type="sequence variant" id="VAR_089167" description="In GMPGS; uncertain significance; severely reduced interaction with TOMM22 and TOMM40; does not affect mitochondrial localization; dbSNP:rs778567973." evidence="5">
    <original>P</original>
    <variation>L</variation>
    <location>
        <position position="29"/>
    </location>
</feature>
<feature type="sequence conflict" description="In Ref. 1; CAB38060." evidence="7" ref="1">
    <original>P</original>
    <variation>S</variation>
    <location>
        <position position="45"/>
    </location>
</feature>
<feature type="helix" evidence="9">
    <location>
        <begin position="6"/>
        <end position="38"/>
    </location>
</feature>
<feature type="strand" evidence="8">
    <location>
        <begin position="41"/>
        <end position="44"/>
    </location>
</feature>
<feature type="helix" evidence="9">
    <location>
        <begin position="49"/>
        <end position="52"/>
    </location>
</feature>